<protein>
    <recommendedName>
        <fullName>Uncharacterized protein ORF41</fullName>
    </recommendedName>
</protein>
<keyword id="KW-1185">Reference proteome</keyword>
<gene>
    <name type="primary">ORF41</name>
</gene>
<sequence length="300" mass="33892">MYLRDFHELAPSQTGKGYEVFFVVGFTKAGLKLGRLVLVNKRYLIQKKGCVTIPNKWMYWDPFQAFVVHDREYLQIFFRSLPEVIVNQLCLTHRFPQVSGSFTREICGFATDWIRNLVVSLDPRSEARLGLQQRLSLVDHLKTTFPDDYLDLRQLPPSTGGLYTTVSTAEMFNPTGTPDFLAAFDALFEEGGGTHKPPIQFPTVRFDKCEGTCEAADHIHELTRRIIGEVRRVYISNATGKVIPLLVVLTAVITAENRGVEVPERVGARPIHATGNIHFDTVLSYVVQMMYLGKVRVCAP</sequence>
<dbReference type="EMBL" id="M75136">
    <property type="protein sequence ID" value="AAA88144.1"/>
    <property type="molecule type" value="Genomic_DNA"/>
</dbReference>
<dbReference type="PIR" id="F36790">
    <property type="entry name" value="F36790"/>
</dbReference>
<dbReference type="RefSeq" id="NP_041132.1">
    <property type="nucleotide sequence ID" value="NC_001493.2"/>
</dbReference>
<dbReference type="GeneID" id="1488452"/>
<dbReference type="KEGG" id="vg:1488452"/>
<dbReference type="Proteomes" id="UP000007643">
    <property type="component" value="Segment"/>
</dbReference>
<feature type="chain" id="PRO_0000222123" description="Uncharacterized protein ORF41">
    <location>
        <begin position="1"/>
        <end position="300"/>
    </location>
</feature>
<name>VG41_ICHVA</name>
<organism>
    <name type="scientific">Ictalurid herpesvirus 1 (strain Auburn)</name>
    <name type="common">IcHV-1</name>
    <name type="synonym">Channel catfish herpesvirus</name>
    <dbReference type="NCBI Taxonomy" id="766178"/>
    <lineage>
        <taxon>Viruses</taxon>
        <taxon>Duplodnaviria</taxon>
        <taxon>Heunggongvirae</taxon>
        <taxon>Peploviricota</taxon>
        <taxon>Herviviricetes</taxon>
        <taxon>Herpesvirales</taxon>
        <taxon>Alloherpesviridae</taxon>
        <taxon>Ictavirus</taxon>
        <taxon>Ictavirus ictaluridallo1</taxon>
        <taxon>Ictalurid herpesvirus 1</taxon>
    </lineage>
</organism>
<proteinExistence type="predicted"/>
<reference key="1">
    <citation type="journal article" date="1992" name="Virology">
        <title>Channel catfish virus: a new type of herpesvirus.</title>
        <authorList>
            <person name="Davison A.J."/>
        </authorList>
    </citation>
    <scope>NUCLEOTIDE SEQUENCE [LARGE SCALE GENOMIC DNA]</scope>
</reference>
<accession>Q00117</accession>
<organismHost>
    <name type="scientific">Ictaluridae</name>
    <name type="common">bullhead catfishes</name>
    <dbReference type="NCBI Taxonomy" id="7996"/>
</organismHost>